<gene>
    <name evidence="1" type="primary">murB</name>
    <name type="ordered locus">BURPS668_0916</name>
</gene>
<sequence>MSRPDSAVSLLPDYSLRAHNTFGFDARARVAARIGSPGQFASLARDPRVAGLDRLVLGGGSNVVFTRDFDGLVLLDEIRSRALVREDDGAWYVEAGGGENWHAFVEWTLAEGMPGLENLALIPGTVGAAPIQNIGAYGLEMKEHFASLRAVDLATGELVEFDAARCAFGYRDSFFKRDGRGRFAIVAVTFRLPKAWTPRIGYADVARELAARGIDARAARARDVFDAVVAIRRAKLPDPLALGNAGSFFKNPVIDAQAFAALRAREPDIVSYPQPDGRVKLAAGWLIDRCGWKGRALGAAAVHERQALVLVNLGGASGADVLALAHAIRRDVLGRFGVELEMEPVCL</sequence>
<protein>
    <recommendedName>
        <fullName evidence="1">UDP-N-acetylenolpyruvoylglucosamine reductase</fullName>
        <ecNumber evidence="1">1.3.1.98</ecNumber>
    </recommendedName>
    <alternativeName>
        <fullName evidence="1">UDP-N-acetylmuramate dehydrogenase</fullName>
    </alternativeName>
</protein>
<organism>
    <name type="scientific">Burkholderia pseudomallei (strain 668)</name>
    <dbReference type="NCBI Taxonomy" id="320373"/>
    <lineage>
        <taxon>Bacteria</taxon>
        <taxon>Pseudomonadati</taxon>
        <taxon>Pseudomonadota</taxon>
        <taxon>Betaproteobacteria</taxon>
        <taxon>Burkholderiales</taxon>
        <taxon>Burkholderiaceae</taxon>
        <taxon>Burkholderia</taxon>
        <taxon>pseudomallei group</taxon>
    </lineage>
</organism>
<name>MURB_BURP6</name>
<evidence type="ECO:0000255" key="1">
    <source>
        <dbReference type="HAMAP-Rule" id="MF_00037"/>
    </source>
</evidence>
<proteinExistence type="inferred from homology"/>
<keyword id="KW-0131">Cell cycle</keyword>
<keyword id="KW-0132">Cell division</keyword>
<keyword id="KW-0133">Cell shape</keyword>
<keyword id="KW-0961">Cell wall biogenesis/degradation</keyword>
<keyword id="KW-0963">Cytoplasm</keyword>
<keyword id="KW-0274">FAD</keyword>
<keyword id="KW-0285">Flavoprotein</keyword>
<keyword id="KW-0521">NADP</keyword>
<keyword id="KW-0560">Oxidoreductase</keyword>
<keyword id="KW-0573">Peptidoglycan synthesis</keyword>
<feature type="chain" id="PRO_1000002875" description="UDP-N-acetylenolpyruvoylglucosamine reductase">
    <location>
        <begin position="1"/>
        <end position="347"/>
    </location>
</feature>
<feature type="domain" description="FAD-binding PCMH-type" evidence="1">
    <location>
        <begin position="24"/>
        <end position="195"/>
    </location>
</feature>
<feature type="active site" evidence="1">
    <location>
        <position position="171"/>
    </location>
</feature>
<feature type="active site" description="Proton donor" evidence="1">
    <location>
        <position position="247"/>
    </location>
</feature>
<feature type="active site" evidence="1">
    <location>
        <position position="343"/>
    </location>
</feature>
<reference key="1">
    <citation type="journal article" date="2010" name="Genome Biol. Evol.">
        <title>Continuing evolution of Burkholderia mallei through genome reduction and large-scale rearrangements.</title>
        <authorList>
            <person name="Losada L."/>
            <person name="Ronning C.M."/>
            <person name="DeShazer D."/>
            <person name="Woods D."/>
            <person name="Fedorova N."/>
            <person name="Kim H.S."/>
            <person name="Shabalina S.A."/>
            <person name="Pearson T.R."/>
            <person name="Brinkac L."/>
            <person name="Tan P."/>
            <person name="Nandi T."/>
            <person name="Crabtree J."/>
            <person name="Badger J."/>
            <person name="Beckstrom-Sternberg S."/>
            <person name="Saqib M."/>
            <person name="Schutzer S.E."/>
            <person name="Keim P."/>
            <person name="Nierman W.C."/>
        </authorList>
    </citation>
    <scope>NUCLEOTIDE SEQUENCE [LARGE SCALE GENOMIC DNA]</scope>
    <source>
        <strain>668</strain>
    </source>
</reference>
<dbReference type="EC" id="1.3.1.98" evidence="1"/>
<dbReference type="EMBL" id="CP000570">
    <property type="protein sequence ID" value="ABN83475.1"/>
    <property type="molecule type" value="Genomic_DNA"/>
</dbReference>
<dbReference type="SMR" id="A3N6J6"/>
<dbReference type="KEGG" id="bpd:BURPS668_0916"/>
<dbReference type="HOGENOM" id="CLU_035304_0_0_4"/>
<dbReference type="UniPathway" id="UPA00219"/>
<dbReference type="GO" id="GO:0005829">
    <property type="term" value="C:cytosol"/>
    <property type="evidence" value="ECO:0007669"/>
    <property type="project" value="TreeGrafter"/>
</dbReference>
<dbReference type="GO" id="GO:0071949">
    <property type="term" value="F:FAD binding"/>
    <property type="evidence" value="ECO:0007669"/>
    <property type="project" value="InterPro"/>
</dbReference>
<dbReference type="GO" id="GO:0008762">
    <property type="term" value="F:UDP-N-acetylmuramate dehydrogenase activity"/>
    <property type="evidence" value="ECO:0007669"/>
    <property type="project" value="UniProtKB-UniRule"/>
</dbReference>
<dbReference type="GO" id="GO:0051301">
    <property type="term" value="P:cell division"/>
    <property type="evidence" value="ECO:0007669"/>
    <property type="project" value="UniProtKB-KW"/>
</dbReference>
<dbReference type="GO" id="GO:0071555">
    <property type="term" value="P:cell wall organization"/>
    <property type="evidence" value="ECO:0007669"/>
    <property type="project" value="UniProtKB-KW"/>
</dbReference>
<dbReference type="GO" id="GO:0009252">
    <property type="term" value="P:peptidoglycan biosynthetic process"/>
    <property type="evidence" value="ECO:0007669"/>
    <property type="project" value="UniProtKB-UniRule"/>
</dbReference>
<dbReference type="GO" id="GO:0008360">
    <property type="term" value="P:regulation of cell shape"/>
    <property type="evidence" value="ECO:0007669"/>
    <property type="project" value="UniProtKB-KW"/>
</dbReference>
<dbReference type="Gene3D" id="3.30.465.10">
    <property type="match status" value="1"/>
</dbReference>
<dbReference type="Gene3D" id="3.90.78.10">
    <property type="entry name" value="UDP-N-acetylenolpyruvoylglucosamine reductase, C-terminal domain"/>
    <property type="match status" value="1"/>
</dbReference>
<dbReference type="Gene3D" id="3.30.43.10">
    <property type="entry name" value="Uridine Diphospho-n-acetylenolpyruvylglucosamine Reductase, domain 2"/>
    <property type="match status" value="1"/>
</dbReference>
<dbReference type="HAMAP" id="MF_00037">
    <property type="entry name" value="MurB"/>
    <property type="match status" value="1"/>
</dbReference>
<dbReference type="InterPro" id="IPR016166">
    <property type="entry name" value="FAD-bd_PCMH"/>
</dbReference>
<dbReference type="InterPro" id="IPR036318">
    <property type="entry name" value="FAD-bd_PCMH-like_sf"/>
</dbReference>
<dbReference type="InterPro" id="IPR016167">
    <property type="entry name" value="FAD-bd_PCMH_sub1"/>
</dbReference>
<dbReference type="InterPro" id="IPR016169">
    <property type="entry name" value="FAD-bd_PCMH_sub2"/>
</dbReference>
<dbReference type="InterPro" id="IPR003170">
    <property type="entry name" value="MurB"/>
</dbReference>
<dbReference type="InterPro" id="IPR011601">
    <property type="entry name" value="MurB_C"/>
</dbReference>
<dbReference type="InterPro" id="IPR036635">
    <property type="entry name" value="MurB_C_sf"/>
</dbReference>
<dbReference type="InterPro" id="IPR006094">
    <property type="entry name" value="Oxid_FAD_bind_N"/>
</dbReference>
<dbReference type="NCBIfam" id="TIGR00179">
    <property type="entry name" value="murB"/>
    <property type="match status" value="1"/>
</dbReference>
<dbReference type="NCBIfam" id="NF000755">
    <property type="entry name" value="PRK00046.1"/>
    <property type="match status" value="1"/>
</dbReference>
<dbReference type="PANTHER" id="PTHR21071">
    <property type="entry name" value="UDP-N-ACETYLENOLPYRUVOYLGLUCOSAMINE REDUCTASE"/>
    <property type="match status" value="1"/>
</dbReference>
<dbReference type="PANTHER" id="PTHR21071:SF4">
    <property type="entry name" value="UDP-N-ACETYLENOLPYRUVOYLGLUCOSAMINE REDUCTASE"/>
    <property type="match status" value="1"/>
</dbReference>
<dbReference type="Pfam" id="PF01565">
    <property type="entry name" value="FAD_binding_4"/>
    <property type="match status" value="1"/>
</dbReference>
<dbReference type="Pfam" id="PF02873">
    <property type="entry name" value="MurB_C"/>
    <property type="match status" value="1"/>
</dbReference>
<dbReference type="SUPFAM" id="SSF56176">
    <property type="entry name" value="FAD-binding/transporter-associated domain-like"/>
    <property type="match status" value="1"/>
</dbReference>
<dbReference type="SUPFAM" id="SSF56194">
    <property type="entry name" value="Uridine diphospho-N-Acetylenolpyruvylglucosamine reductase, MurB, C-terminal domain"/>
    <property type="match status" value="1"/>
</dbReference>
<dbReference type="PROSITE" id="PS51387">
    <property type="entry name" value="FAD_PCMH"/>
    <property type="match status" value="1"/>
</dbReference>
<comment type="function">
    <text evidence="1">Cell wall formation.</text>
</comment>
<comment type="catalytic activity">
    <reaction evidence="1">
        <text>UDP-N-acetyl-alpha-D-muramate + NADP(+) = UDP-N-acetyl-3-O-(1-carboxyvinyl)-alpha-D-glucosamine + NADPH + H(+)</text>
        <dbReference type="Rhea" id="RHEA:12248"/>
        <dbReference type="ChEBI" id="CHEBI:15378"/>
        <dbReference type="ChEBI" id="CHEBI:57783"/>
        <dbReference type="ChEBI" id="CHEBI:58349"/>
        <dbReference type="ChEBI" id="CHEBI:68483"/>
        <dbReference type="ChEBI" id="CHEBI:70757"/>
        <dbReference type="EC" id="1.3.1.98"/>
    </reaction>
</comment>
<comment type="cofactor">
    <cofactor evidence="1">
        <name>FAD</name>
        <dbReference type="ChEBI" id="CHEBI:57692"/>
    </cofactor>
</comment>
<comment type="pathway">
    <text evidence="1">Cell wall biogenesis; peptidoglycan biosynthesis.</text>
</comment>
<comment type="subcellular location">
    <subcellularLocation>
        <location evidence="1">Cytoplasm</location>
    </subcellularLocation>
</comment>
<comment type="similarity">
    <text evidence="1">Belongs to the MurB family.</text>
</comment>
<accession>A3N6J6</accession>